<name>CHIP_BETVU</name>
<keyword id="KW-0119">Carbohydrate metabolism</keyword>
<keyword id="KW-0146">Chitin degradation</keyword>
<keyword id="KW-0147">Chitin-binding</keyword>
<keyword id="KW-0903">Direct protein sequencing</keyword>
<keyword id="KW-1015">Disulfide bond</keyword>
<keyword id="KW-0325">Glycoprotein</keyword>
<keyword id="KW-0326">Glycosidase</keyword>
<keyword id="KW-0378">Hydrolase</keyword>
<keyword id="KW-0379">Hydroxylation</keyword>
<keyword id="KW-0611">Plant defense</keyword>
<keyword id="KW-0624">Polysaccharide degradation</keyword>
<keyword id="KW-0873">Pyrrolidone carboxylic acid</keyword>
<keyword id="KW-0677">Repeat</keyword>
<keyword id="KW-0964">Secreted</keyword>
<keyword id="KW-0732">Signal</keyword>
<dbReference type="EC" id="3.2.1.14"/>
<dbReference type="EMBL" id="L25826">
    <property type="protein sequence ID" value="AAA32916.1"/>
    <property type="molecule type" value="mRNA"/>
</dbReference>
<dbReference type="PIR" id="S46536">
    <property type="entry name" value="S46536"/>
</dbReference>
<dbReference type="SMR" id="P42820"/>
<dbReference type="CAZy" id="CBM18">
    <property type="family name" value="Carbohydrate-Binding Module Family 18"/>
</dbReference>
<dbReference type="CAZy" id="GH19">
    <property type="family name" value="Glycoside Hydrolase Family 19"/>
</dbReference>
<dbReference type="GO" id="GO:0005576">
    <property type="term" value="C:extracellular region"/>
    <property type="evidence" value="ECO:0007669"/>
    <property type="project" value="UniProtKB-SubCell"/>
</dbReference>
<dbReference type="GO" id="GO:0008061">
    <property type="term" value="F:chitin binding"/>
    <property type="evidence" value="ECO:0007669"/>
    <property type="project" value="UniProtKB-KW"/>
</dbReference>
<dbReference type="GO" id="GO:0008843">
    <property type="term" value="F:endochitinase activity"/>
    <property type="evidence" value="ECO:0007669"/>
    <property type="project" value="UniProtKB-EC"/>
</dbReference>
<dbReference type="GO" id="GO:0016998">
    <property type="term" value="P:cell wall macromolecule catabolic process"/>
    <property type="evidence" value="ECO:0007669"/>
    <property type="project" value="InterPro"/>
</dbReference>
<dbReference type="GO" id="GO:0006032">
    <property type="term" value="P:chitin catabolic process"/>
    <property type="evidence" value="ECO:0007669"/>
    <property type="project" value="UniProtKB-KW"/>
</dbReference>
<dbReference type="GO" id="GO:0006952">
    <property type="term" value="P:defense response"/>
    <property type="evidence" value="ECO:0007669"/>
    <property type="project" value="UniProtKB-KW"/>
</dbReference>
<dbReference type="GO" id="GO:0000272">
    <property type="term" value="P:polysaccharide catabolic process"/>
    <property type="evidence" value="ECO:0007669"/>
    <property type="project" value="UniProtKB-KW"/>
</dbReference>
<dbReference type="CDD" id="cd00325">
    <property type="entry name" value="chitinase_GH19"/>
    <property type="match status" value="1"/>
</dbReference>
<dbReference type="CDD" id="cd00035">
    <property type="entry name" value="ChtBD1"/>
    <property type="match status" value="1"/>
</dbReference>
<dbReference type="FunFam" id="3.30.20.10:FF:000001">
    <property type="entry name" value="Endochitinase (Chitinase)"/>
    <property type="match status" value="1"/>
</dbReference>
<dbReference type="Gene3D" id="1.10.530.10">
    <property type="match status" value="1"/>
</dbReference>
<dbReference type="Gene3D" id="3.30.20.10">
    <property type="entry name" value="Endochitinase, domain 2"/>
    <property type="match status" value="1"/>
</dbReference>
<dbReference type="Gene3D" id="3.30.60.10">
    <property type="entry name" value="Endochitinase-like"/>
    <property type="match status" value="1"/>
</dbReference>
<dbReference type="InterPro" id="IPR001002">
    <property type="entry name" value="Chitin-bd_1"/>
</dbReference>
<dbReference type="InterPro" id="IPR018371">
    <property type="entry name" value="Chitin-binding_1_CS"/>
</dbReference>
<dbReference type="InterPro" id="IPR036861">
    <property type="entry name" value="Endochitinase-like_sf"/>
</dbReference>
<dbReference type="InterPro" id="IPR016283">
    <property type="entry name" value="Glyco_hydro_19"/>
</dbReference>
<dbReference type="InterPro" id="IPR000726">
    <property type="entry name" value="Glyco_hydro_19_cat"/>
</dbReference>
<dbReference type="InterPro" id="IPR023346">
    <property type="entry name" value="Lysozyme-like_dom_sf"/>
</dbReference>
<dbReference type="PANTHER" id="PTHR22595:SF194">
    <property type="entry name" value="CHITINASE FAMILY PROTEIN"/>
    <property type="match status" value="1"/>
</dbReference>
<dbReference type="PANTHER" id="PTHR22595">
    <property type="entry name" value="CHITINASE-RELATED"/>
    <property type="match status" value="1"/>
</dbReference>
<dbReference type="Pfam" id="PF00187">
    <property type="entry name" value="Chitin_bind_1"/>
    <property type="match status" value="1"/>
</dbReference>
<dbReference type="Pfam" id="PF00182">
    <property type="entry name" value="Glyco_hydro_19"/>
    <property type="match status" value="2"/>
</dbReference>
<dbReference type="PIRSF" id="PIRSF001060">
    <property type="entry name" value="Endochitinase"/>
    <property type="match status" value="1"/>
</dbReference>
<dbReference type="SMART" id="SM00270">
    <property type="entry name" value="ChtBD1"/>
    <property type="match status" value="1"/>
</dbReference>
<dbReference type="SUPFAM" id="SSF53955">
    <property type="entry name" value="Lysozyme-like"/>
    <property type="match status" value="1"/>
</dbReference>
<dbReference type="SUPFAM" id="SSF57016">
    <property type="entry name" value="Plant lectins/antimicrobial peptides"/>
    <property type="match status" value="1"/>
</dbReference>
<dbReference type="PROSITE" id="PS00026">
    <property type="entry name" value="CHIT_BIND_I_1"/>
    <property type="match status" value="1"/>
</dbReference>
<dbReference type="PROSITE" id="PS50941">
    <property type="entry name" value="CHIT_BIND_I_2"/>
    <property type="match status" value="1"/>
</dbReference>
<sequence>MTLLLKNTLYLALIISVISSFPTSLFAQNCGCAPNLCCSNFGFCGTGTPYCGVGNCQSGPCEGGTPTTPTTPTTPTTPGTGGGGSSVSDIVSQAFFDGIIGQAAASCPGKNFYTRAAFLSAVDPKFGNEGSSDDNKREIAAFFAHISHETTNLCHIEERDGDVGDAYCDQDKAAQYPCAAGKKYYGRGPLQLSWNYNYALAGQAIGFDGLGNPEKVATDVNTSFKAAMWFWMTNVHSVMNQGFGATTKAINGALECNGQNQDQANDRIQFYKKYCADFGVAPGDNLTC</sequence>
<organism>
    <name type="scientific">Beta vulgaris</name>
    <name type="common">Sugar beet</name>
    <dbReference type="NCBI Taxonomy" id="161934"/>
    <lineage>
        <taxon>Eukaryota</taxon>
        <taxon>Viridiplantae</taxon>
        <taxon>Streptophyta</taxon>
        <taxon>Embryophyta</taxon>
        <taxon>Tracheophyta</taxon>
        <taxon>Spermatophyta</taxon>
        <taxon>Magnoliopsida</taxon>
        <taxon>eudicotyledons</taxon>
        <taxon>Gunneridae</taxon>
        <taxon>Pentapetalae</taxon>
        <taxon>Caryophyllales</taxon>
        <taxon>Chenopodiaceae</taxon>
        <taxon>Betoideae</taxon>
        <taxon>Beta</taxon>
    </lineage>
</organism>
<feature type="signal peptide">
    <location>
        <begin position="1"/>
        <end position="27"/>
    </location>
</feature>
<feature type="chain" id="PRO_0000005289" description="Acidic endochitinase SP2">
    <location>
        <begin position="28"/>
        <end position="288"/>
    </location>
</feature>
<feature type="domain" description="Chitin-binding type-1" evidence="3">
    <location>
        <begin position="28"/>
        <end position="63"/>
    </location>
</feature>
<feature type="repeat" description="1">
    <location>
        <begin position="67"/>
        <end position="69"/>
    </location>
</feature>
<feature type="repeat" description="2">
    <location>
        <begin position="70"/>
        <end position="72"/>
    </location>
</feature>
<feature type="repeat" description="3">
    <location>
        <begin position="73"/>
        <end position="75"/>
    </location>
</feature>
<feature type="repeat" description="4">
    <location>
        <begin position="76"/>
        <end position="78"/>
    </location>
</feature>
<feature type="region of interest" description="Hinge region (Gly/Pro/Thr-rich)">
    <location>
        <begin position="64"/>
        <end position="85"/>
    </location>
</feature>
<feature type="region of interest" description="Disordered" evidence="4">
    <location>
        <begin position="64"/>
        <end position="84"/>
    </location>
</feature>
<feature type="region of interest" description="4 X 3 AA tandem repeats of T-T-P">
    <location>
        <begin position="67"/>
        <end position="78"/>
    </location>
</feature>
<feature type="region of interest" description="Catalytic">
    <location>
        <begin position="86"/>
        <end position="288"/>
    </location>
</feature>
<feature type="compositionally biased region" description="Low complexity" evidence="4">
    <location>
        <begin position="64"/>
        <end position="78"/>
    </location>
</feature>
<feature type="active site" description="Proton donor" evidence="2">
    <location>
        <position position="149"/>
    </location>
</feature>
<feature type="modified residue" description="Pyrrolidone carboxylic acid" evidence="6">
    <location>
        <position position="28"/>
    </location>
</feature>
<feature type="modified residue" description="4-hydroxyproline" evidence="1">
    <location>
        <position position="66"/>
    </location>
</feature>
<feature type="modified residue" description="4-hydroxyproline" evidence="1">
    <location>
        <position position="69"/>
    </location>
</feature>
<feature type="modified residue" description="4-hydroxyproline" evidence="1">
    <location>
        <position position="72"/>
    </location>
</feature>
<feature type="modified residue" description="4-hydroxyproline" evidence="1">
    <location>
        <position position="75"/>
    </location>
</feature>
<feature type="disulfide bond" evidence="3">
    <location>
        <begin position="30"/>
        <end position="38"/>
    </location>
</feature>
<feature type="disulfide bond" evidence="3">
    <location>
        <begin position="32"/>
        <end position="44"/>
    </location>
</feature>
<feature type="disulfide bond" evidence="3">
    <location>
        <begin position="37"/>
        <end position="51"/>
    </location>
</feature>
<feature type="disulfide bond" evidence="3">
    <location>
        <begin position="56"/>
        <end position="61"/>
    </location>
</feature>
<feature type="disulfide bond" evidence="3">
    <location>
        <begin position="107"/>
        <end position="154"/>
    </location>
</feature>
<feature type="disulfide bond" evidence="3">
    <location>
        <begin position="168"/>
        <end position="178"/>
    </location>
</feature>
<feature type="disulfide bond" evidence="3">
    <location>
        <begin position="256"/>
        <end position="288"/>
    </location>
</feature>
<protein>
    <recommendedName>
        <fullName>Acidic endochitinase SP2</fullName>
        <ecNumber>3.2.1.14</ecNumber>
    </recommendedName>
</protein>
<proteinExistence type="evidence at protein level"/>
<reference key="1">
    <citation type="journal article" date="1994" name="Plant Mol. Biol.">
        <title>A hydroxyproline-containing class IV chitinase of sugar beet is glycosylated with xylose.</title>
        <authorList>
            <person name="Nielsen K.K."/>
            <person name="Bojsen K."/>
            <person name="Roepstorff P."/>
            <person name="Mikkelsen J.D."/>
        </authorList>
    </citation>
    <scope>NUCLEOTIDE SEQUENCE [MRNA]</scope>
    <scope>PARTIAL PROTEIN SEQUENCE</scope>
    <scope>PYROGLUTAMATE FORMATION AT GLN-28</scope>
    <source>
        <strain>cv. Monova</strain>
        <tissue>Leaf</tissue>
    </source>
</reference>
<gene>
    <name type="primary">SP2</name>
</gene>
<accession>P42820</accession>
<evidence type="ECO:0000250" key="1"/>
<evidence type="ECO:0000250" key="2">
    <source>
        <dbReference type="UniProtKB" id="P29022"/>
    </source>
</evidence>
<evidence type="ECO:0000255" key="3">
    <source>
        <dbReference type="PROSITE-ProRule" id="PRU00261"/>
    </source>
</evidence>
<evidence type="ECO:0000256" key="4">
    <source>
        <dbReference type="SAM" id="MobiDB-lite"/>
    </source>
</evidence>
<evidence type="ECO:0000305" key="5"/>
<evidence type="ECO:0000305" key="6">
    <source>
    </source>
</evidence>
<comment type="function">
    <text>Defense against chitin-containing fungal pathogens.</text>
</comment>
<comment type="catalytic activity">
    <reaction>
        <text>Random endo-hydrolysis of N-acetyl-beta-D-glucosaminide (1-&gt;4)-beta-linkages in chitin and chitodextrins.</text>
        <dbReference type="EC" id="3.2.1.14"/>
    </reaction>
</comment>
<comment type="subcellular location">
    <subcellularLocation>
        <location>Secreted</location>
        <location>Extracellular space</location>
    </subcellularLocation>
</comment>
<comment type="tissue specificity">
    <text>Localized to infected area.</text>
</comment>
<comment type="induction">
    <text>By infection with Cercospora beticola.</text>
</comment>
<comment type="PTM">
    <text>O-glycosylated on hydroxyprolines; contains xylose.</text>
</comment>
<comment type="similarity">
    <text evidence="5">Belongs to the glycosyl hydrolase 19 family. Chitinase class I subfamily.</text>
</comment>